<feature type="signal peptide" evidence="3 5">
    <location>
        <begin position="1"/>
        <end position="17"/>
    </location>
</feature>
<feature type="chain" id="PRO_0000011032" description="Interleukin-17 receptor B">
    <location>
        <begin position="18"/>
        <end position="502"/>
    </location>
</feature>
<feature type="topological domain" description="Extracellular" evidence="1">
    <location>
        <begin position="18"/>
        <end position="292"/>
    </location>
</feature>
<feature type="transmembrane region" description="Helical" evidence="1">
    <location>
        <begin position="293"/>
        <end position="313"/>
    </location>
</feature>
<feature type="topological domain" description="Cytoplasmic" evidence="1">
    <location>
        <begin position="314"/>
        <end position="502"/>
    </location>
</feature>
<feature type="domain" description="SEFIR" evidence="2">
    <location>
        <begin position="331"/>
        <end position="477"/>
    </location>
</feature>
<feature type="glycosylation site" description="N-linked (GlcNAc...) asparagine" evidence="1">
    <location>
        <position position="67"/>
    </location>
</feature>
<feature type="glycosylation site" description="N-linked (GlcNAc...) asparagine" evidence="1">
    <location>
        <position position="103"/>
    </location>
</feature>
<feature type="glycosylation site" description="N-linked (GlcNAc...) asparagine" evidence="1">
    <location>
        <position position="156"/>
    </location>
</feature>
<feature type="glycosylation site" description="N-linked (GlcNAc...) asparagine" evidence="1">
    <location>
        <position position="183"/>
    </location>
</feature>
<feature type="glycosylation site" description="N-linked (GlcNAc...) asparagine" evidence="1">
    <location>
        <position position="197"/>
    </location>
</feature>
<feature type="glycosylation site" description="N-linked (GlcNAc...) asparagine" evidence="1">
    <location>
        <position position="283"/>
    </location>
</feature>
<feature type="splice variant" id="VSP_001740" description="In isoform 2." evidence="9">
    <original>LTPYFPTCGSDCIRHKGTVVLCPQTGVPFPLDNNKSKPG</original>
    <variation>VKFSELLWGGKGHRRLFHHSLLLRMSSLLSNALLPADTS</variation>
    <location>
        <begin position="250"/>
        <end position="288"/>
    </location>
</feature>
<feature type="splice variant" id="VSP_001741" description="In isoform 2." evidence="9">
    <location>
        <begin position="289"/>
        <end position="502"/>
    </location>
</feature>
<feature type="sequence variant" id="VAR_059304" description="In dbSNP:rs2232337.">
    <original>G</original>
    <variation>R</variation>
    <location>
        <position position="177"/>
    </location>
</feature>
<feature type="sequence variant" id="VAR_049178" description="In dbSNP:rs2232340.">
    <original>A</original>
    <variation>V</variation>
    <location>
        <position position="209"/>
    </location>
</feature>
<feature type="sequence variant" id="VAR_049179" description="In dbSNP:rs2232343.">
    <original>R</original>
    <variation>Q</variation>
    <location>
        <position position="232"/>
    </location>
</feature>
<feature type="sequence variant" id="VAR_019209" description="In dbSNP:rs2232346." evidence="8">
    <original>F</original>
    <variation>L</variation>
    <location>
        <position position="278"/>
    </location>
</feature>
<feature type="sequence variant" id="VAR_019210" description="In dbSNP:rs2232350." evidence="8">
    <original>I</original>
    <variation>T</variation>
    <location>
        <position position="451"/>
    </location>
</feature>
<feature type="sequence variant" id="VAR_019211" description="In dbSNP:rs2232351." evidence="8">
    <original>N</original>
    <variation>S</variation>
    <location>
        <position position="458"/>
    </location>
</feature>
<feature type="sequence variant" id="VAR_019212" description="In dbSNP:rs28385751." evidence="8">
    <original>C</original>
    <variation>R</variation>
    <location>
        <position position="499"/>
    </location>
</feature>
<feature type="sequence conflict" description="In Ref. 1; AAF86051/AAF86052." evidence="10" ref="1">
    <original>L</original>
    <variation>I</variation>
    <location>
        <position position="6"/>
    </location>
</feature>
<feature type="sequence conflict" description="In Ref. 2; AA sequence." evidence="10" ref="2">
    <original>LFPLA</original>
    <variation>SSPCL</variation>
    <location>
        <begin position="422"/>
        <end position="426"/>
    </location>
</feature>
<feature type="sequence conflict" description="In Ref. 2; AA sequence." evidence="10" ref="2">
    <location>
        <begin position="427"/>
        <end position="502"/>
    </location>
</feature>
<feature type="sequence conflict" description="In Ref. 1; AAF86051." evidence="10" ref="1">
    <original>L</original>
    <variation>F</variation>
    <location>
        <position position="468"/>
    </location>
</feature>
<feature type="strand" evidence="11">
    <location>
        <begin position="22"/>
        <end position="24"/>
    </location>
</feature>
<feature type="helix" evidence="11">
    <location>
        <begin position="32"/>
        <end position="35"/>
    </location>
</feature>
<feature type="strand" evidence="11">
    <location>
        <begin position="49"/>
        <end position="55"/>
    </location>
</feature>
<feature type="strand" evidence="11">
    <location>
        <begin position="63"/>
        <end position="70"/>
    </location>
</feature>
<feature type="strand" evidence="11">
    <location>
        <begin position="83"/>
        <end position="90"/>
    </location>
</feature>
<feature type="strand" evidence="11">
    <location>
        <begin position="92"/>
        <end position="94"/>
    </location>
</feature>
<feature type="strand" evidence="11">
    <location>
        <begin position="96"/>
        <end position="106"/>
    </location>
</feature>
<feature type="strand" evidence="11">
    <location>
        <begin position="121"/>
        <end position="127"/>
    </location>
</feature>
<feature type="strand" evidence="11">
    <location>
        <begin position="133"/>
        <end position="142"/>
    </location>
</feature>
<feature type="strand" evidence="11">
    <location>
        <begin position="154"/>
        <end position="158"/>
    </location>
</feature>
<feature type="strand" evidence="11">
    <location>
        <begin position="162"/>
        <end position="165"/>
    </location>
</feature>
<feature type="strand" evidence="11">
    <location>
        <begin position="168"/>
        <end position="170"/>
    </location>
</feature>
<feature type="helix" evidence="11">
    <location>
        <begin position="171"/>
        <end position="176"/>
    </location>
</feature>
<feature type="strand" evidence="11">
    <location>
        <begin position="185"/>
        <end position="187"/>
    </location>
</feature>
<feature type="strand" evidence="11">
    <location>
        <begin position="190"/>
        <end position="197"/>
    </location>
</feature>
<feature type="strand" evidence="11">
    <location>
        <begin position="205"/>
        <end position="207"/>
    </location>
</feature>
<feature type="strand" evidence="11">
    <location>
        <begin position="210"/>
        <end position="219"/>
    </location>
</feature>
<feature type="strand" evidence="11">
    <location>
        <begin position="235"/>
        <end position="238"/>
    </location>
</feature>
<feature type="strand" evidence="11">
    <location>
        <begin position="247"/>
        <end position="250"/>
    </location>
</feature>
<feature type="turn" evidence="11">
    <location>
        <begin position="255"/>
        <end position="259"/>
    </location>
</feature>
<feature type="strand" evidence="11">
    <location>
        <begin position="263"/>
        <end position="267"/>
    </location>
</feature>
<organism>
    <name type="scientific">Homo sapiens</name>
    <name type="common">Human</name>
    <dbReference type="NCBI Taxonomy" id="9606"/>
    <lineage>
        <taxon>Eukaryota</taxon>
        <taxon>Metazoa</taxon>
        <taxon>Chordata</taxon>
        <taxon>Craniata</taxon>
        <taxon>Vertebrata</taxon>
        <taxon>Euteleostomi</taxon>
        <taxon>Mammalia</taxon>
        <taxon>Eutheria</taxon>
        <taxon>Euarchontoglires</taxon>
        <taxon>Primates</taxon>
        <taxon>Haplorrhini</taxon>
        <taxon>Catarrhini</taxon>
        <taxon>Hominidae</taxon>
        <taxon>Homo</taxon>
    </lineage>
</organism>
<reference key="1">
    <citation type="journal article" date="2000" name="Oncogene">
        <title>Evi27 encodes a novel membrane protein with homology to the IL17 receptor.</title>
        <authorList>
            <person name="Tian E."/>
            <person name="Sawyer J.R."/>
            <person name="Largaespada D.A."/>
            <person name="Jenkins N.A."/>
            <person name="Copeland N.G."/>
            <person name="Shaughnessy J.D. Jr."/>
        </authorList>
    </citation>
    <scope>NUCLEOTIDE SEQUENCE [MRNA] (ISOFORMS 1 AND 2)</scope>
</reference>
<reference key="2">
    <citation type="journal article" date="2000" name="J. Biol. Chem.">
        <title>A novel cytokine receptor-ligand pair. Identification, molecular characterization, and in vivo immunomodulatory activity.</title>
        <authorList>
            <person name="Shi Y."/>
            <person name="Ullrich S.J."/>
            <person name="Zhang J."/>
            <person name="Connolly K."/>
            <person name="Grzegorzewski K.J."/>
            <person name="Barber M.C."/>
            <person name="Wang W."/>
            <person name="Wathen K."/>
            <person name="Hodge V."/>
            <person name="Fisher C.L."/>
            <person name="Olsen H."/>
            <person name="Ruben S.M."/>
            <person name="Knyazev I."/>
            <person name="Cho Y.H."/>
            <person name="Kao V."/>
            <person name="Wilkinson K.A."/>
            <person name="Carrell J.A."/>
            <person name="Ebner R."/>
        </authorList>
    </citation>
    <scope>NUCLEOTIDE SEQUENCE [MRNA] (ISOFORM 1)</scope>
    <scope>PROTEIN SEQUENCE OF N-TERMINUS</scope>
    <source>
        <tissue>Lung</tissue>
    </source>
</reference>
<reference key="3">
    <citation type="submission" date="2000-03" db="EMBL/GenBank/DDBJ databases">
        <authorList>
            <person name="Zhang W."/>
            <person name="Cao X."/>
        </authorList>
    </citation>
    <scope>NUCLEOTIDE SEQUENCE [MRNA] (ISOFORM 1)</scope>
</reference>
<reference key="4">
    <citation type="journal article" date="2003" name="Genome Res.">
        <title>The secreted protein discovery initiative (SPDI), a large-scale effort to identify novel human secreted and transmembrane proteins: a bioinformatics assessment.</title>
        <authorList>
            <person name="Clark H.F."/>
            <person name="Gurney A.L."/>
            <person name="Abaya E."/>
            <person name="Baker K."/>
            <person name="Baldwin D.T."/>
            <person name="Brush J."/>
            <person name="Chen J."/>
            <person name="Chow B."/>
            <person name="Chui C."/>
            <person name="Crowley C."/>
            <person name="Currell B."/>
            <person name="Deuel B."/>
            <person name="Dowd P."/>
            <person name="Eaton D."/>
            <person name="Foster J.S."/>
            <person name="Grimaldi C."/>
            <person name="Gu Q."/>
            <person name="Hass P.E."/>
            <person name="Heldens S."/>
            <person name="Huang A."/>
            <person name="Kim H.S."/>
            <person name="Klimowski L."/>
            <person name="Jin Y."/>
            <person name="Johnson S."/>
            <person name="Lee J."/>
            <person name="Lewis L."/>
            <person name="Liao D."/>
            <person name="Mark M.R."/>
            <person name="Robbie E."/>
            <person name="Sanchez C."/>
            <person name="Schoenfeld J."/>
            <person name="Seshagiri S."/>
            <person name="Simmons L."/>
            <person name="Singh J."/>
            <person name="Smith V."/>
            <person name="Stinson J."/>
            <person name="Vagts A."/>
            <person name="Vandlen R.L."/>
            <person name="Watanabe C."/>
            <person name="Wieand D."/>
            <person name="Woods K."/>
            <person name="Xie M.-H."/>
            <person name="Yansura D.G."/>
            <person name="Yi S."/>
            <person name="Yu G."/>
            <person name="Yuan J."/>
            <person name="Zhang M."/>
            <person name="Zhang Z."/>
            <person name="Goddard A.D."/>
            <person name="Wood W.I."/>
            <person name="Godowski P.J."/>
            <person name="Gray A.M."/>
        </authorList>
    </citation>
    <scope>NUCLEOTIDE SEQUENCE [LARGE SCALE MRNA] (ISOFORM 1)</scope>
</reference>
<reference key="5">
    <citation type="submission" date="2004-01" db="EMBL/GenBank/DDBJ databases">
        <authorList>
            <consortium name="SeattleSNPs variation discovery resource"/>
        </authorList>
    </citation>
    <scope>NUCLEOTIDE SEQUENCE [GENOMIC DNA]</scope>
    <scope>VARIANTS LEU-278; THR-451; SER-458 AND ARG-499</scope>
</reference>
<reference key="6">
    <citation type="journal article" date="2004" name="Genome Res.">
        <title>The status, quality, and expansion of the NIH full-length cDNA project: the Mammalian Gene Collection (MGC).</title>
        <authorList>
            <consortium name="The MGC Project Team"/>
        </authorList>
    </citation>
    <scope>NUCLEOTIDE SEQUENCE [LARGE SCALE MRNA] (ISOFORM 1)</scope>
    <source>
        <tissue>Cervix</tissue>
    </source>
</reference>
<reference key="7">
    <citation type="journal article" date="2004" name="Protein Sci.">
        <title>Signal peptide prediction based on analysis of experimentally verified cleavage sites.</title>
        <authorList>
            <person name="Zhang Z."/>
            <person name="Henzel W.J."/>
        </authorList>
    </citation>
    <scope>PROTEIN SEQUENCE OF 18-32</scope>
</reference>
<reference key="8">
    <citation type="journal article" date="2001" name="J. Biol. Chem.">
        <title>IL-17E, a novel proinflammatory ligand for the IL-17 receptor homolog IL-17Rh1.</title>
        <authorList>
            <person name="Lee J."/>
            <person name="Ho W.-H."/>
            <person name="Maruoka M."/>
            <person name="Corpuz R.T."/>
            <person name="Baldwin D.T."/>
            <person name="Foster J.S."/>
            <person name="Goddard A.D."/>
            <person name="Yansura D.G."/>
            <person name="Vandlen R.L."/>
            <person name="Wood W.I."/>
            <person name="Gurney A.L."/>
        </authorList>
    </citation>
    <scope>FUNCTION</scope>
</reference>
<reference key="9">
    <citation type="journal article" date="2004" name="Genome Biol.">
        <title>An unappreciated role for RNA surveillance.</title>
        <authorList>
            <person name="Hillman R.T."/>
            <person name="Green R.E."/>
            <person name="Brenner S.E."/>
        </authorList>
    </citation>
    <scope>SPLICE ISOFORM(S) THAT ARE POTENTIAL NMD TARGET(S)</scope>
</reference>
<reference key="10">
    <citation type="journal article" date="2012" name="Immunobiology">
        <title>Smurf2 regulates IL17RB by proteasomal degradation of its novel binding partner DAZAP2.</title>
        <authorList>
            <person name="Popova A."/>
            <person name="Kzhyshkowska J."/>
            <person name="Nurgazieva D."/>
            <person name="Goerdt S."/>
            <person name="Gratchev A."/>
        </authorList>
    </citation>
    <scope>INTERACTION WITH DAZAP2</scope>
</reference>
<reference key="11">
    <citation type="journal article" date="2013" name="Immunity">
        <title>An ACT1 mutation selectively abolishes interleukin-17 responses in humans with chronic mucocutaneous candidiasis.</title>
        <authorList>
            <person name="Boisson B."/>
            <person name="Wang C."/>
            <person name="Pedergnana V."/>
            <person name="Wu L."/>
            <person name="Cypowyj S."/>
            <person name="Rybojad M."/>
            <person name="Belkadi A."/>
            <person name="Picard C."/>
            <person name="Abel L."/>
            <person name="Fieschi C."/>
            <person name="Puel A."/>
            <person name="Li X."/>
            <person name="Casanova J.L."/>
        </authorList>
    </citation>
    <scope>INTERACTION WITH TRAF3IP2</scope>
</reference>
<gene>
    <name type="primary">IL17RB</name>
    <name type="synonym">CRL4</name>
    <name type="synonym">EVI27</name>
    <name type="synonym">IL17BR</name>
    <name type="ORF">UNQ2501/PRO19612</name>
</gene>
<protein>
    <recommendedName>
        <fullName>Interleukin-17 receptor B</fullName>
        <shortName>IL-17 receptor B</shortName>
        <shortName>IL-17RB</shortName>
    </recommendedName>
    <alternativeName>
        <fullName>Cytokine receptor-like 4</fullName>
    </alternativeName>
    <alternativeName>
        <fullName>IL-17 receptor homolog 1</fullName>
        <shortName>IL-17Rh1</shortName>
        <shortName>IL17Rh1</shortName>
    </alternativeName>
    <alternativeName>
        <fullName>Interleukin-17B receptor</fullName>
        <shortName>IL-17B receptor</shortName>
    </alternativeName>
</protein>
<accession>Q9NRM6</accession>
<accession>Q9BPZ0</accession>
<accession>Q9NRL4</accession>
<accession>Q9NRM5</accession>
<proteinExistence type="evidence at protein level"/>
<keyword id="KW-0002">3D-structure</keyword>
<keyword id="KW-0025">Alternative splicing</keyword>
<keyword id="KW-1003">Cell membrane</keyword>
<keyword id="KW-0903">Direct protein sequencing</keyword>
<keyword id="KW-0325">Glycoprotein</keyword>
<keyword id="KW-0472">Membrane</keyword>
<keyword id="KW-1267">Proteomics identification</keyword>
<keyword id="KW-0675">Receptor</keyword>
<keyword id="KW-1185">Reference proteome</keyword>
<keyword id="KW-0964">Secreted</keyword>
<keyword id="KW-0732">Signal</keyword>
<keyword id="KW-0812">Transmembrane</keyword>
<keyword id="KW-1133">Transmembrane helix</keyword>
<dbReference type="EMBL" id="AF208110">
    <property type="protein sequence ID" value="AAF86051.1"/>
    <property type="molecule type" value="mRNA"/>
</dbReference>
<dbReference type="EMBL" id="AF208111">
    <property type="protein sequence ID" value="AAF86052.1"/>
    <property type="molecule type" value="mRNA"/>
</dbReference>
<dbReference type="EMBL" id="AF212365">
    <property type="protein sequence ID" value="AAF78776.1"/>
    <property type="molecule type" value="mRNA"/>
</dbReference>
<dbReference type="EMBL" id="AF250309">
    <property type="protein sequence ID" value="AAK37428.1"/>
    <property type="molecule type" value="mRNA"/>
</dbReference>
<dbReference type="EMBL" id="AY359122">
    <property type="protein sequence ID" value="AAQ89956.1"/>
    <property type="molecule type" value="mRNA"/>
</dbReference>
<dbReference type="EMBL" id="AY518533">
    <property type="protein sequence ID" value="AAR89910.1"/>
    <property type="molecule type" value="Genomic_DNA"/>
</dbReference>
<dbReference type="EMBL" id="BC000980">
    <property type="protein sequence ID" value="AAH00980.1"/>
    <property type="molecule type" value="mRNA"/>
</dbReference>
<dbReference type="CCDS" id="CCDS2874.1">
    <molecule id="Q9NRM6-1"/>
</dbReference>
<dbReference type="RefSeq" id="NP_061195.2">
    <molecule id="Q9NRM6-1"/>
    <property type="nucleotide sequence ID" value="NM_018725.3"/>
</dbReference>
<dbReference type="PDB" id="7UWJ">
    <property type="method" value="EM"/>
    <property type="resolution" value="3.20 A"/>
    <property type="chains" value="C/D=18-272"/>
</dbReference>
<dbReference type="PDB" id="7UWK">
    <property type="method" value="EM"/>
    <property type="resolution" value="4.40 A"/>
    <property type="chains" value="C/D/I/J/K/L=18-288"/>
</dbReference>
<dbReference type="PDB" id="7UWL">
    <property type="method" value="EM"/>
    <property type="resolution" value="3.70 A"/>
    <property type="chains" value="C/D=18-288"/>
</dbReference>
<dbReference type="PDBsum" id="7UWJ"/>
<dbReference type="PDBsum" id="7UWK"/>
<dbReference type="PDBsum" id="7UWL"/>
<dbReference type="EMDB" id="EMD-26833"/>
<dbReference type="EMDB" id="EMD-26834"/>
<dbReference type="EMDB" id="EMD-26835"/>
<dbReference type="SMR" id="Q9NRM6"/>
<dbReference type="BioGRID" id="120708">
    <property type="interactions" value="47"/>
</dbReference>
<dbReference type="ComplexPortal" id="CPX-9204">
    <property type="entry name" value="Interleukin-25 receptor-ligand complex"/>
</dbReference>
<dbReference type="ComplexPortal" id="CPX-9206">
    <property type="entry name" value="Interleukin-17B receptor-ligand complex"/>
</dbReference>
<dbReference type="CORUM" id="Q9NRM6"/>
<dbReference type="FunCoup" id="Q9NRM6">
    <property type="interactions" value="593"/>
</dbReference>
<dbReference type="IntAct" id="Q9NRM6">
    <property type="interactions" value="30"/>
</dbReference>
<dbReference type="STRING" id="9606.ENSP00000288167"/>
<dbReference type="GlyCosmos" id="Q9NRM6">
    <property type="glycosylation" value="6 sites, No reported glycans"/>
</dbReference>
<dbReference type="GlyGen" id="Q9NRM6">
    <property type="glycosylation" value="6 sites, 8 N-linked glycans (3 sites)"/>
</dbReference>
<dbReference type="iPTMnet" id="Q9NRM6"/>
<dbReference type="PhosphoSitePlus" id="Q9NRM6"/>
<dbReference type="SwissPalm" id="Q9NRM6"/>
<dbReference type="BioMuta" id="IL17RB"/>
<dbReference type="DMDM" id="21263748"/>
<dbReference type="jPOST" id="Q9NRM6"/>
<dbReference type="MassIVE" id="Q9NRM6"/>
<dbReference type="PaxDb" id="9606-ENSP00000288167"/>
<dbReference type="PeptideAtlas" id="Q9NRM6"/>
<dbReference type="ProteomicsDB" id="82390">
    <molecule id="Q9NRM6-1"/>
</dbReference>
<dbReference type="ABCD" id="Q9NRM6">
    <property type="antibodies" value="3 sequenced antibodies"/>
</dbReference>
<dbReference type="Antibodypedia" id="1155">
    <property type="antibodies" value="523 antibodies from 34 providers"/>
</dbReference>
<dbReference type="DNASU" id="55540"/>
<dbReference type="Ensembl" id="ENST00000288167.8">
    <molecule id="Q9NRM6-1"/>
    <property type="protein sequence ID" value="ENSP00000288167.3"/>
    <property type="gene ID" value="ENSG00000056736.10"/>
</dbReference>
<dbReference type="GeneID" id="55540"/>
<dbReference type="KEGG" id="hsa:55540"/>
<dbReference type="MANE-Select" id="ENST00000288167.8">
    <property type="protein sequence ID" value="ENSP00000288167.3"/>
    <property type="RefSeq nucleotide sequence ID" value="NM_018725.4"/>
    <property type="RefSeq protein sequence ID" value="NP_061195.2"/>
</dbReference>
<dbReference type="UCSC" id="uc003dha.4">
    <molecule id="Q9NRM6-1"/>
    <property type="organism name" value="human"/>
</dbReference>
<dbReference type="AGR" id="HGNC:18015"/>
<dbReference type="CTD" id="55540"/>
<dbReference type="DisGeNET" id="55540"/>
<dbReference type="GeneCards" id="IL17RB"/>
<dbReference type="HGNC" id="HGNC:18015">
    <property type="gene designation" value="IL17RB"/>
</dbReference>
<dbReference type="HPA" id="ENSG00000056736">
    <property type="expression patterns" value="Group enriched (brain, cervix, kidney, liver)"/>
</dbReference>
<dbReference type="MIM" id="605458">
    <property type="type" value="gene"/>
</dbReference>
<dbReference type="neXtProt" id="NX_Q9NRM6"/>
<dbReference type="OpenTargets" id="ENSG00000056736"/>
<dbReference type="PharmGKB" id="PA29796"/>
<dbReference type="VEuPathDB" id="HostDB:ENSG00000056736"/>
<dbReference type="eggNOG" id="ENOG502RD98">
    <property type="taxonomic scope" value="Eukaryota"/>
</dbReference>
<dbReference type="GeneTree" id="ENSGT00940000161145"/>
<dbReference type="HOGENOM" id="CLU_037593_0_0_1"/>
<dbReference type="InParanoid" id="Q9NRM6"/>
<dbReference type="OMA" id="HKYMVVY"/>
<dbReference type="OrthoDB" id="8963084at2759"/>
<dbReference type="PAN-GO" id="Q9NRM6">
    <property type="GO annotations" value="1 GO annotation based on evolutionary models"/>
</dbReference>
<dbReference type="PhylomeDB" id="Q9NRM6"/>
<dbReference type="TreeFam" id="TF329644"/>
<dbReference type="PathwayCommons" id="Q9NRM6"/>
<dbReference type="Reactome" id="R-HSA-448424">
    <property type="pathway name" value="Interleukin-17 signaling"/>
</dbReference>
<dbReference type="SignaLink" id="Q9NRM6"/>
<dbReference type="SIGNOR" id="Q9NRM6"/>
<dbReference type="BioGRID-ORCS" id="55540">
    <property type="hits" value="5 hits in 1153 CRISPR screens"/>
</dbReference>
<dbReference type="ChiTaRS" id="IL17RB">
    <property type="organism name" value="human"/>
</dbReference>
<dbReference type="GeneWiki" id="IL17RB"/>
<dbReference type="GenomeRNAi" id="55540"/>
<dbReference type="Pharos" id="Q9NRM6">
    <property type="development level" value="Tbio"/>
</dbReference>
<dbReference type="PRO" id="PR:Q9NRM6"/>
<dbReference type="Proteomes" id="UP000005640">
    <property type="component" value="Chromosome 3"/>
</dbReference>
<dbReference type="RNAct" id="Q9NRM6">
    <property type="molecule type" value="protein"/>
</dbReference>
<dbReference type="Bgee" id="ENSG00000056736">
    <property type="expression patterns" value="Expressed in nephron tubule and 149 other cell types or tissues"/>
</dbReference>
<dbReference type="ExpressionAtlas" id="Q9NRM6">
    <property type="expression patterns" value="baseline and differential"/>
</dbReference>
<dbReference type="GO" id="GO:0009986">
    <property type="term" value="C:cell surface"/>
    <property type="evidence" value="ECO:0007669"/>
    <property type="project" value="Ensembl"/>
</dbReference>
<dbReference type="GO" id="GO:0005737">
    <property type="term" value="C:cytoplasm"/>
    <property type="evidence" value="ECO:0007669"/>
    <property type="project" value="Ensembl"/>
</dbReference>
<dbReference type="GO" id="GO:0005576">
    <property type="term" value="C:extracellular region"/>
    <property type="evidence" value="ECO:0007669"/>
    <property type="project" value="UniProtKB-SubCell"/>
</dbReference>
<dbReference type="GO" id="GO:0043231">
    <property type="term" value="C:intracellular membrane-bounded organelle"/>
    <property type="evidence" value="ECO:0000314"/>
    <property type="project" value="HPA"/>
</dbReference>
<dbReference type="GO" id="GO:0016020">
    <property type="term" value="C:membrane"/>
    <property type="evidence" value="ECO:0000303"/>
    <property type="project" value="UniProtKB"/>
</dbReference>
<dbReference type="GO" id="GO:0005886">
    <property type="term" value="C:plasma membrane"/>
    <property type="evidence" value="ECO:0000314"/>
    <property type="project" value="HPA"/>
</dbReference>
<dbReference type="GO" id="GO:0004896">
    <property type="term" value="F:cytokine receptor activity"/>
    <property type="evidence" value="ECO:0000303"/>
    <property type="project" value="UniProtKB"/>
</dbReference>
<dbReference type="GO" id="GO:0030368">
    <property type="term" value="F:interleukin-17 receptor activity"/>
    <property type="evidence" value="ECO:0000318"/>
    <property type="project" value="GO_Central"/>
</dbReference>
<dbReference type="GO" id="GO:0006952">
    <property type="term" value="P:defense response"/>
    <property type="evidence" value="ECO:0000304"/>
    <property type="project" value="ProtInc"/>
</dbReference>
<dbReference type="GO" id="GO:0050729">
    <property type="term" value="P:positive regulation of inflammatory response"/>
    <property type="evidence" value="ECO:0007669"/>
    <property type="project" value="Ensembl"/>
</dbReference>
<dbReference type="GO" id="GO:0032736">
    <property type="term" value="P:positive regulation of interleukin-13 production"/>
    <property type="evidence" value="ECO:0007669"/>
    <property type="project" value="Ensembl"/>
</dbReference>
<dbReference type="GO" id="GO:0032754">
    <property type="term" value="P:positive regulation of interleukin-5 production"/>
    <property type="evidence" value="ECO:0007669"/>
    <property type="project" value="Ensembl"/>
</dbReference>
<dbReference type="GO" id="GO:0001558">
    <property type="term" value="P:regulation of cell growth"/>
    <property type="evidence" value="ECO:0000303"/>
    <property type="project" value="UniProtKB"/>
</dbReference>
<dbReference type="FunFam" id="2.60.40.2150:FF:000001">
    <property type="entry name" value="Interleukin 17 receptor B"/>
    <property type="match status" value="1"/>
</dbReference>
<dbReference type="FunFam" id="2.60.40.2160:FF:000002">
    <property type="entry name" value="Interleukin 17 receptor B"/>
    <property type="match status" value="1"/>
</dbReference>
<dbReference type="FunFam" id="3.40.50.11530:FF:000004">
    <property type="entry name" value="Interleukin 17 receptor B"/>
    <property type="match status" value="1"/>
</dbReference>
<dbReference type="Gene3D" id="3.40.50.11530">
    <property type="match status" value="1"/>
</dbReference>
<dbReference type="Gene3D" id="2.60.40.2160">
    <property type="entry name" value="Interleukin-17 receptor A/B, fibronectin-III-like domain 1"/>
    <property type="match status" value="1"/>
</dbReference>
<dbReference type="Gene3D" id="2.60.40.2150">
    <property type="entry name" value="Interleukin-17 receptor A/B, fibronectin-III-like domain 2"/>
    <property type="match status" value="1"/>
</dbReference>
<dbReference type="InterPro" id="IPR039465">
    <property type="entry name" value="IL-17_rcpt-like"/>
</dbReference>
<dbReference type="InterPro" id="IPR032356">
    <property type="entry name" value="IL17R_fnIII_D1"/>
</dbReference>
<dbReference type="InterPro" id="IPR038683">
    <property type="entry name" value="IL17RA/B_FnIII-like_1_sf"/>
</dbReference>
<dbReference type="InterPro" id="IPR043046">
    <property type="entry name" value="IL17RA/B_FnIII-like_2_sf"/>
</dbReference>
<dbReference type="InterPro" id="IPR013568">
    <property type="entry name" value="SEFIR_dom"/>
</dbReference>
<dbReference type="PANTHER" id="PTHR15583">
    <property type="entry name" value="INTERLEUKIN-17 RECEPTOR"/>
    <property type="match status" value="1"/>
</dbReference>
<dbReference type="PANTHER" id="PTHR15583:SF11">
    <property type="entry name" value="INTERLEUKIN-17 RECEPTOR B"/>
    <property type="match status" value="1"/>
</dbReference>
<dbReference type="Pfam" id="PF16556">
    <property type="entry name" value="IL17R_fnIII_D1"/>
    <property type="match status" value="1"/>
</dbReference>
<dbReference type="Pfam" id="PF16578">
    <property type="entry name" value="IL17R_fnIII_D2"/>
    <property type="match status" value="1"/>
</dbReference>
<dbReference type="Pfam" id="PF08357">
    <property type="entry name" value="SEFIR"/>
    <property type="match status" value="1"/>
</dbReference>
<dbReference type="PROSITE" id="PS51534">
    <property type="entry name" value="SEFIR"/>
    <property type="match status" value="1"/>
</dbReference>
<comment type="function">
    <text evidence="4">Receptor for the pro-inflammatory cytokines IL17B and IL17E. May play a role in controlling the growth and/or differentiation of hematopoietic cells.</text>
</comment>
<comment type="subunit">
    <text evidence="6 7">Interacts with DAZAP2 (PubMed:22070932). Interacts with TRAF3IP2 (PubMed:24120361).</text>
</comment>
<comment type="interaction">
    <interactant intactId="EBI-2867349">
        <id>Q9NRM6</id>
    </interactant>
    <interactant intactId="EBI-724310">
        <id>Q15038</id>
        <label>DAZAP2</label>
    </interactant>
    <organismsDiffer>false</organismsDiffer>
    <experiments>3</experiments>
</comment>
<comment type="subcellular location">
    <molecule>Isoform 1</molecule>
    <subcellularLocation>
        <location>Cell membrane</location>
        <topology>Single-pass type I membrane protein</topology>
    </subcellularLocation>
</comment>
<comment type="subcellular location">
    <molecule>Isoform 2</molecule>
    <subcellularLocation>
        <location>Secreted</location>
    </subcellularLocation>
</comment>
<comment type="alternative products">
    <event type="alternative splicing"/>
    <isoform>
        <id>Q9NRM6-1</id>
        <name>1</name>
        <sequence type="displayed"/>
    </isoform>
    <isoform>
        <id>Q9NRM6-2</id>
        <name>2</name>
        <sequence type="described" ref="VSP_001740 VSP_001741"/>
    </isoform>
</comment>
<comment type="tissue specificity">
    <text>Expressed in several endocrine tissues, mostly in fetal and adult liver, kidney, pancreas, testis, colon, brain and small intestine; not detected in peripheral blood leukocytes, lymphoid organs, and most cell lines.</text>
</comment>
<comment type="miscellaneous">
    <molecule>Isoform 2</molecule>
    <text evidence="10">May be produced at very low levels due to a premature stop codon in the mRNA, leading to nonsense-mediated mRNA decay.</text>
</comment>
<sequence>MSLVLLSLAALCRSAVPREPTVQCGSETGPSPEWMLQHDLIPGDLRDLRVEPVTTSVATGDYSILMNVSWVLRADASIRLLKATKICVTGKSNFQSYSCVRCNYTEAFQTQTRPSGGKWTFSYIGFPVELNTVYFIGAHNIPNANMNEDGPSMSVNFTSPGCLDHIMKYKKKCVKAGSLWDPNITACKKNEETVEVNFTTTPLGNRYMALIQHSTIIGFSQVFEPHQKKQTRASVVIPVTGDSEGATVQLTPYFPTCGSDCIRHKGTVVLCPQTGVPFPLDNNKSKPGGWLPLLLLSLLVATWVLVAGIYLMWRHERIKKTSFSTTTLLPPIKVLVVYPSEICFHHTICYFTEFLQNHCRSEVILEKWQKKKIAEMGPVQWLATQKKAADKVVFLLSNDVNSVCDGTCGKSEGSPSENSQDLFPLAFNLFCSDLRSQIHLHKYVVVYFREIDTKDDYNALSVCPKYHLMKDATAFCAELLHVKQQVSAGKRSQACHDGCCSL</sequence>
<name>I17RB_HUMAN</name>
<evidence type="ECO:0000255" key="1"/>
<evidence type="ECO:0000255" key="2">
    <source>
        <dbReference type="PROSITE-ProRule" id="PRU00867"/>
    </source>
</evidence>
<evidence type="ECO:0000269" key="3">
    <source>
    </source>
</evidence>
<evidence type="ECO:0000269" key="4">
    <source>
    </source>
</evidence>
<evidence type="ECO:0000269" key="5">
    <source>
    </source>
</evidence>
<evidence type="ECO:0000269" key="6">
    <source>
    </source>
</evidence>
<evidence type="ECO:0000269" key="7">
    <source>
    </source>
</evidence>
<evidence type="ECO:0000269" key="8">
    <source ref="5"/>
</evidence>
<evidence type="ECO:0000303" key="9">
    <source>
    </source>
</evidence>
<evidence type="ECO:0000305" key="10"/>
<evidence type="ECO:0007829" key="11">
    <source>
        <dbReference type="PDB" id="7UWJ"/>
    </source>
</evidence>